<sequence>MLTPTVRKFQYGQHTVTLETGMMARQATAAVMVTMDDTAVFVTVVGAKKAREGQDFFPLTVNYQERAYAAGRFPGGFFRREGRPGEGETLTARLIDRPIRPLFPEGFLNEVQVVATVVSVNPQVSPDIVAMIGASAALSLSGIPFNGPIGAARVGYINDQYVLNPTQDELKQSRLDLVVAGTDNAVLMVESEADLLSEDQMLGAVVFGHEQQQIVIENIKALAAEVGKPRWEWHAPEVNVALQRRVAEMAEARLGEAYHITEKQARYAKVDEIKESVIADLLAEDDALDAGEISDILGALEKAVVRGRVLRGEPRIDGREKDMIRALDVRTGVLPRTHGSALFTRGETQALVTATLGTERDAQNIDELMGERTDRFLLHYNFPPYSVGETGMMGSPKRREIGHGRLAKRGVLAVMPSQDAFPYTVRVVSEITESNGSSSMASVCGASLALMDAGVPIKAAVAGIAMGLVKEQDNFVVLSDILGDEDHLGDMDFKVAGSRDGVTALQMDIKIEGITREIMQVALNQAKGARLHILGVMEQAINAPRGDISEFAPRIHTIKINPEKIKDVIGKGGSVIRALTEETGTTIEIEDDGTVKIAATDGDKAKHAIRRIEEITAEIEVGRIYQGKVTRIVDFGAFVAIGGGKEGLVHISQIADKRVEKVTDYLQMGQEVAVKVLEVDRQGRVRLSIKEANASAAAGQDAPTDAE</sequence>
<gene>
    <name evidence="1" type="primary">pnp</name>
    <name type="ordered locus">NT01EI_0472</name>
</gene>
<name>PNP_EDWI9</name>
<accession>C5BFC1</accession>
<protein>
    <recommendedName>
        <fullName evidence="1">Polyribonucleotide nucleotidyltransferase</fullName>
        <ecNumber evidence="1">2.7.7.8</ecNumber>
    </recommendedName>
    <alternativeName>
        <fullName evidence="1">Polynucleotide phosphorylase</fullName>
        <shortName evidence="1">PNPase</shortName>
    </alternativeName>
</protein>
<keyword id="KW-0963">Cytoplasm</keyword>
<keyword id="KW-0460">Magnesium</keyword>
<keyword id="KW-0479">Metal-binding</keyword>
<keyword id="KW-0548">Nucleotidyltransferase</keyword>
<keyword id="KW-0694">RNA-binding</keyword>
<keyword id="KW-0808">Transferase</keyword>
<feature type="chain" id="PRO_1000215658" description="Polyribonucleotide nucleotidyltransferase">
    <location>
        <begin position="1"/>
        <end position="707"/>
    </location>
</feature>
<feature type="domain" description="KH" evidence="1">
    <location>
        <begin position="553"/>
        <end position="612"/>
    </location>
</feature>
<feature type="domain" description="S1 motif" evidence="1">
    <location>
        <begin position="622"/>
        <end position="690"/>
    </location>
</feature>
<feature type="binding site" evidence="1">
    <location>
        <position position="486"/>
    </location>
    <ligand>
        <name>Mg(2+)</name>
        <dbReference type="ChEBI" id="CHEBI:18420"/>
    </ligand>
</feature>
<feature type="binding site" evidence="1">
    <location>
        <position position="492"/>
    </location>
    <ligand>
        <name>Mg(2+)</name>
        <dbReference type="ChEBI" id="CHEBI:18420"/>
    </ligand>
</feature>
<reference key="1">
    <citation type="submission" date="2009-03" db="EMBL/GenBank/DDBJ databases">
        <title>Complete genome sequence of Edwardsiella ictaluri 93-146.</title>
        <authorList>
            <person name="Williams M.L."/>
            <person name="Gillaspy A.F."/>
            <person name="Dyer D.W."/>
            <person name="Thune R.L."/>
            <person name="Waldbieser G.C."/>
            <person name="Schuster S.C."/>
            <person name="Gipson J."/>
            <person name="Zaitshik J."/>
            <person name="Landry C."/>
            <person name="Lawrence M.L."/>
        </authorList>
    </citation>
    <scope>NUCLEOTIDE SEQUENCE [LARGE SCALE GENOMIC DNA]</scope>
    <source>
        <strain>93-146</strain>
    </source>
</reference>
<comment type="function">
    <text evidence="1">Involved in mRNA degradation. Catalyzes the phosphorolysis of single-stranded polyribonucleotides processively in the 3'- to 5'-direction.</text>
</comment>
<comment type="catalytic activity">
    <reaction evidence="1">
        <text>RNA(n+1) + phosphate = RNA(n) + a ribonucleoside 5'-diphosphate</text>
        <dbReference type="Rhea" id="RHEA:22096"/>
        <dbReference type="Rhea" id="RHEA-COMP:14527"/>
        <dbReference type="Rhea" id="RHEA-COMP:17342"/>
        <dbReference type="ChEBI" id="CHEBI:43474"/>
        <dbReference type="ChEBI" id="CHEBI:57930"/>
        <dbReference type="ChEBI" id="CHEBI:140395"/>
        <dbReference type="EC" id="2.7.7.8"/>
    </reaction>
</comment>
<comment type="cofactor">
    <cofactor evidence="1">
        <name>Mg(2+)</name>
        <dbReference type="ChEBI" id="CHEBI:18420"/>
    </cofactor>
</comment>
<comment type="subunit">
    <text evidence="1">Component of the RNA degradosome, which is a multiprotein complex involved in RNA processing and mRNA degradation.</text>
</comment>
<comment type="subcellular location">
    <subcellularLocation>
        <location evidence="1">Cytoplasm</location>
    </subcellularLocation>
</comment>
<comment type="similarity">
    <text evidence="1">Belongs to the polyribonucleotide nucleotidyltransferase family.</text>
</comment>
<proteinExistence type="inferred from homology"/>
<dbReference type="EC" id="2.7.7.8" evidence="1"/>
<dbReference type="EMBL" id="CP001600">
    <property type="protein sequence ID" value="ACR67707.1"/>
    <property type="molecule type" value="Genomic_DNA"/>
</dbReference>
<dbReference type="RefSeq" id="WP_015869908.1">
    <property type="nucleotide sequence ID" value="NZ_CP169062.1"/>
</dbReference>
<dbReference type="SMR" id="C5BFC1"/>
<dbReference type="STRING" id="67780.B6E78_13115"/>
<dbReference type="GeneID" id="69537558"/>
<dbReference type="KEGG" id="eic:NT01EI_0472"/>
<dbReference type="PATRIC" id="fig|634503.3.peg.428"/>
<dbReference type="HOGENOM" id="CLU_004217_2_2_6"/>
<dbReference type="OrthoDB" id="9804305at2"/>
<dbReference type="Proteomes" id="UP000001485">
    <property type="component" value="Chromosome"/>
</dbReference>
<dbReference type="GO" id="GO:0005829">
    <property type="term" value="C:cytosol"/>
    <property type="evidence" value="ECO:0007669"/>
    <property type="project" value="TreeGrafter"/>
</dbReference>
<dbReference type="GO" id="GO:0000175">
    <property type="term" value="F:3'-5'-RNA exonuclease activity"/>
    <property type="evidence" value="ECO:0007669"/>
    <property type="project" value="TreeGrafter"/>
</dbReference>
<dbReference type="GO" id="GO:0000287">
    <property type="term" value="F:magnesium ion binding"/>
    <property type="evidence" value="ECO:0007669"/>
    <property type="project" value="UniProtKB-UniRule"/>
</dbReference>
<dbReference type="GO" id="GO:0004654">
    <property type="term" value="F:polyribonucleotide nucleotidyltransferase activity"/>
    <property type="evidence" value="ECO:0007669"/>
    <property type="project" value="UniProtKB-UniRule"/>
</dbReference>
<dbReference type="GO" id="GO:0003723">
    <property type="term" value="F:RNA binding"/>
    <property type="evidence" value="ECO:0007669"/>
    <property type="project" value="UniProtKB-UniRule"/>
</dbReference>
<dbReference type="GO" id="GO:0006402">
    <property type="term" value="P:mRNA catabolic process"/>
    <property type="evidence" value="ECO:0007669"/>
    <property type="project" value="UniProtKB-UniRule"/>
</dbReference>
<dbReference type="GO" id="GO:0006396">
    <property type="term" value="P:RNA processing"/>
    <property type="evidence" value="ECO:0007669"/>
    <property type="project" value="InterPro"/>
</dbReference>
<dbReference type="CDD" id="cd02393">
    <property type="entry name" value="KH-I_PNPase"/>
    <property type="match status" value="1"/>
</dbReference>
<dbReference type="CDD" id="cd11363">
    <property type="entry name" value="RNase_PH_PNPase_1"/>
    <property type="match status" value="1"/>
</dbReference>
<dbReference type="CDD" id="cd11364">
    <property type="entry name" value="RNase_PH_PNPase_2"/>
    <property type="match status" value="1"/>
</dbReference>
<dbReference type="CDD" id="cd04472">
    <property type="entry name" value="S1_PNPase"/>
    <property type="match status" value="1"/>
</dbReference>
<dbReference type="FunFam" id="2.40.50.140:FF:000023">
    <property type="entry name" value="Polyribonucleotide nucleotidyltransferase"/>
    <property type="match status" value="1"/>
</dbReference>
<dbReference type="FunFam" id="3.30.1370.10:FF:000001">
    <property type="entry name" value="Polyribonucleotide nucleotidyltransferase"/>
    <property type="match status" value="1"/>
</dbReference>
<dbReference type="FunFam" id="3.30.230.70:FF:000001">
    <property type="entry name" value="Polyribonucleotide nucleotidyltransferase"/>
    <property type="match status" value="1"/>
</dbReference>
<dbReference type="FunFam" id="3.30.230.70:FF:000002">
    <property type="entry name" value="Polyribonucleotide nucleotidyltransferase"/>
    <property type="match status" value="1"/>
</dbReference>
<dbReference type="Gene3D" id="3.30.230.70">
    <property type="entry name" value="GHMP Kinase, N-terminal domain"/>
    <property type="match status" value="2"/>
</dbReference>
<dbReference type="Gene3D" id="3.30.1370.10">
    <property type="entry name" value="K Homology domain, type 1"/>
    <property type="match status" value="1"/>
</dbReference>
<dbReference type="Gene3D" id="2.40.50.140">
    <property type="entry name" value="Nucleic acid-binding proteins"/>
    <property type="match status" value="1"/>
</dbReference>
<dbReference type="HAMAP" id="MF_01595">
    <property type="entry name" value="PNPase"/>
    <property type="match status" value="1"/>
</dbReference>
<dbReference type="InterPro" id="IPR001247">
    <property type="entry name" value="ExoRNase_PH_dom1"/>
</dbReference>
<dbReference type="InterPro" id="IPR015847">
    <property type="entry name" value="ExoRNase_PH_dom2"/>
</dbReference>
<dbReference type="InterPro" id="IPR036345">
    <property type="entry name" value="ExoRNase_PH_dom2_sf"/>
</dbReference>
<dbReference type="InterPro" id="IPR004087">
    <property type="entry name" value="KH_dom"/>
</dbReference>
<dbReference type="InterPro" id="IPR004088">
    <property type="entry name" value="KH_dom_type_1"/>
</dbReference>
<dbReference type="InterPro" id="IPR036612">
    <property type="entry name" value="KH_dom_type_1_sf"/>
</dbReference>
<dbReference type="InterPro" id="IPR012340">
    <property type="entry name" value="NA-bd_OB-fold"/>
</dbReference>
<dbReference type="InterPro" id="IPR012162">
    <property type="entry name" value="PNPase"/>
</dbReference>
<dbReference type="InterPro" id="IPR027408">
    <property type="entry name" value="PNPase/RNase_PH_dom_sf"/>
</dbReference>
<dbReference type="InterPro" id="IPR015848">
    <property type="entry name" value="PNPase_PH_RNA-bd_bac/org-type"/>
</dbReference>
<dbReference type="InterPro" id="IPR036456">
    <property type="entry name" value="PNPase_PH_RNA-bd_sf"/>
</dbReference>
<dbReference type="InterPro" id="IPR020568">
    <property type="entry name" value="Ribosomal_Su5_D2-typ_SF"/>
</dbReference>
<dbReference type="InterPro" id="IPR003029">
    <property type="entry name" value="S1_domain"/>
</dbReference>
<dbReference type="NCBIfam" id="TIGR03591">
    <property type="entry name" value="polynuc_phos"/>
    <property type="match status" value="1"/>
</dbReference>
<dbReference type="NCBIfam" id="NF008805">
    <property type="entry name" value="PRK11824.1"/>
    <property type="match status" value="1"/>
</dbReference>
<dbReference type="PANTHER" id="PTHR11252">
    <property type="entry name" value="POLYRIBONUCLEOTIDE NUCLEOTIDYLTRANSFERASE"/>
    <property type="match status" value="1"/>
</dbReference>
<dbReference type="PANTHER" id="PTHR11252:SF0">
    <property type="entry name" value="POLYRIBONUCLEOTIDE NUCLEOTIDYLTRANSFERASE 1, MITOCHONDRIAL"/>
    <property type="match status" value="1"/>
</dbReference>
<dbReference type="Pfam" id="PF00013">
    <property type="entry name" value="KH_1"/>
    <property type="match status" value="1"/>
</dbReference>
<dbReference type="Pfam" id="PF03726">
    <property type="entry name" value="PNPase"/>
    <property type="match status" value="1"/>
</dbReference>
<dbReference type="Pfam" id="PF01138">
    <property type="entry name" value="RNase_PH"/>
    <property type="match status" value="2"/>
</dbReference>
<dbReference type="Pfam" id="PF03725">
    <property type="entry name" value="RNase_PH_C"/>
    <property type="match status" value="2"/>
</dbReference>
<dbReference type="Pfam" id="PF00575">
    <property type="entry name" value="S1"/>
    <property type="match status" value="1"/>
</dbReference>
<dbReference type="PIRSF" id="PIRSF005499">
    <property type="entry name" value="PNPase"/>
    <property type="match status" value="1"/>
</dbReference>
<dbReference type="SMART" id="SM00322">
    <property type="entry name" value="KH"/>
    <property type="match status" value="1"/>
</dbReference>
<dbReference type="SMART" id="SM00316">
    <property type="entry name" value="S1"/>
    <property type="match status" value="1"/>
</dbReference>
<dbReference type="SUPFAM" id="SSF54791">
    <property type="entry name" value="Eukaryotic type KH-domain (KH-domain type I)"/>
    <property type="match status" value="1"/>
</dbReference>
<dbReference type="SUPFAM" id="SSF50249">
    <property type="entry name" value="Nucleic acid-binding proteins"/>
    <property type="match status" value="1"/>
</dbReference>
<dbReference type="SUPFAM" id="SSF46915">
    <property type="entry name" value="Polynucleotide phosphorylase/guanosine pentaphosphate synthase (PNPase/GPSI), domain 3"/>
    <property type="match status" value="1"/>
</dbReference>
<dbReference type="SUPFAM" id="SSF55666">
    <property type="entry name" value="Ribonuclease PH domain 2-like"/>
    <property type="match status" value="2"/>
</dbReference>
<dbReference type="SUPFAM" id="SSF54211">
    <property type="entry name" value="Ribosomal protein S5 domain 2-like"/>
    <property type="match status" value="2"/>
</dbReference>
<dbReference type="PROSITE" id="PS50084">
    <property type="entry name" value="KH_TYPE_1"/>
    <property type="match status" value="1"/>
</dbReference>
<dbReference type="PROSITE" id="PS50126">
    <property type="entry name" value="S1"/>
    <property type="match status" value="1"/>
</dbReference>
<evidence type="ECO:0000255" key="1">
    <source>
        <dbReference type="HAMAP-Rule" id="MF_01595"/>
    </source>
</evidence>
<organism>
    <name type="scientific">Edwardsiella ictaluri (strain 93-146)</name>
    <dbReference type="NCBI Taxonomy" id="634503"/>
    <lineage>
        <taxon>Bacteria</taxon>
        <taxon>Pseudomonadati</taxon>
        <taxon>Pseudomonadota</taxon>
        <taxon>Gammaproteobacteria</taxon>
        <taxon>Enterobacterales</taxon>
        <taxon>Hafniaceae</taxon>
        <taxon>Edwardsiella</taxon>
    </lineage>
</organism>